<proteinExistence type="inferred from homology"/>
<keyword id="KW-0963">Cytoplasm</keyword>
<keyword id="KW-0342">GTP-binding</keyword>
<keyword id="KW-0378">Hydrolase</keyword>
<keyword id="KW-0460">Magnesium</keyword>
<keyword id="KW-0479">Metal-binding</keyword>
<keyword id="KW-0547">Nucleotide-binding</keyword>
<keyword id="KW-1185">Reference proteome</keyword>
<protein>
    <recommendedName>
        <fullName evidence="1">GTPase Obg</fullName>
        <ecNumber evidence="1">3.6.5.-</ecNumber>
    </recommendedName>
    <alternativeName>
        <fullName evidence="1">GTP-binding protein Obg</fullName>
    </alternativeName>
</protein>
<reference key="1">
    <citation type="journal article" date="2005" name="Science">
        <title>Genome streamlining in a cosmopolitan oceanic bacterium.</title>
        <authorList>
            <person name="Giovannoni S.J."/>
            <person name="Tripp H.J."/>
            <person name="Givan S."/>
            <person name="Podar M."/>
            <person name="Vergin K.L."/>
            <person name="Baptista D."/>
            <person name="Bibbs L."/>
            <person name="Eads J."/>
            <person name="Richardson T.H."/>
            <person name="Noordewier M."/>
            <person name="Rappe M.S."/>
            <person name="Short J.M."/>
            <person name="Carrington J.C."/>
            <person name="Mathur E.J."/>
        </authorList>
    </citation>
    <scope>NUCLEOTIDE SEQUENCE [LARGE SCALE GENOMIC DNA]</scope>
    <source>
        <strain>HTCC1062</strain>
    </source>
</reference>
<sequence>MKFLDQVKIYVKAGNGGHGSPSFRREKFIEYGGPDGGDGGKGGTIYLRSERNLNTLIDYRFQQHHKAGRGVNGSGQNRTGHSGEDLILKVPIGTQVFEEDNKTLIYDFKKEGEEFIVANGGKGGLGNTRFKSSTNRAPKKFTKGAPGEEYVIWLQLKTIADVGIVGLPNAGKSSLLASITNAMPKIANYKFTTLNPNLGVASYDDKEITLADIPGLVEGAHEGVGLGIQFLKHIERCKTLMHLIDITDEDLENTYKQVRNELGSYSKDLLEKKEIIVLNKTDLLEEEEVKEILKNFSKNKDSEVVTLSTLEKGSISRIKAKLLSYVS</sequence>
<evidence type="ECO:0000255" key="1">
    <source>
        <dbReference type="HAMAP-Rule" id="MF_01454"/>
    </source>
</evidence>
<evidence type="ECO:0000255" key="2">
    <source>
        <dbReference type="PROSITE-ProRule" id="PRU01231"/>
    </source>
</evidence>
<comment type="function">
    <text evidence="1">An essential GTPase which binds GTP, GDP and possibly (p)ppGpp with moderate affinity, with high nucleotide exchange rates and a fairly low GTP hydrolysis rate. Plays a role in control of the cell cycle, stress response, ribosome biogenesis and in those bacteria that undergo differentiation, in morphogenesis control.</text>
</comment>
<comment type="cofactor">
    <cofactor evidence="1">
        <name>Mg(2+)</name>
        <dbReference type="ChEBI" id="CHEBI:18420"/>
    </cofactor>
</comment>
<comment type="subunit">
    <text evidence="1">Monomer.</text>
</comment>
<comment type="subcellular location">
    <subcellularLocation>
        <location evidence="1">Cytoplasm</location>
    </subcellularLocation>
</comment>
<comment type="similarity">
    <text evidence="1">Belongs to the TRAFAC class OBG-HflX-like GTPase superfamily. OBG GTPase family.</text>
</comment>
<dbReference type="EC" id="3.6.5.-" evidence="1"/>
<dbReference type="EMBL" id="CP000084">
    <property type="protein sequence ID" value="AAZ21043.1"/>
    <property type="molecule type" value="Genomic_DNA"/>
</dbReference>
<dbReference type="SMR" id="Q4FP46"/>
<dbReference type="STRING" id="335992.SAR11_0222"/>
<dbReference type="GeneID" id="66294719"/>
<dbReference type="KEGG" id="pub:SAR11_0222"/>
<dbReference type="eggNOG" id="COG0536">
    <property type="taxonomic scope" value="Bacteria"/>
</dbReference>
<dbReference type="HOGENOM" id="CLU_011747_2_0_5"/>
<dbReference type="OrthoDB" id="9807318at2"/>
<dbReference type="Proteomes" id="UP000002528">
    <property type="component" value="Chromosome"/>
</dbReference>
<dbReference type="GO" id="GO:0005737">
    <property type="term" value="C:cytoplasm"/>
    <property type="evidence" value="ECO:0007669"/>
    <property type="project" value="UniProtKB-SubCell"/>
</dbReference>
<dbReference type="GO" id="GO:0005525">
    <property type="term" value="F:GTP binding"/>
    <property type="evidence" value="ECO:0007669"/>
    <property type="project" value="UniProtKB-UniRule"/>
</dbReference>
<dbReference type="GO" id="GO:0003924">
    <property type="term" value="F:GTPase activity"/>
    <property type="evidence" value="ECO:0007669"/>
    <property type="project" value="UniProtKB-UniRule"/>
</dbReference>
<dbReference type="GO" id="GO:0000287">
    <property type="term" value="F:magnesium ion binding"/>
    <property type="evidence" value="ECO:0007669"/>
    <property type="project" value="InterPro"/>
</dbReference>
<dbReference type="GO" id="GO:0042254">
    <property type="term" value="P:ribosome biogenesis"/>
    <property type="evidence" value="ECO:0007669"/>
    <property type="project" value="UniProtKB-UniRule"/>
</dbReference>
<dbReference type="CDD" id="cd01898">
    <property type="entry name" value="Obg"/>
    <property type="match status" value="1"/>
</dbReference>
<dbReference type="FunFam" id="2.70.210.12:FF:000001">
    <property type="entry name" value="GTPase Obg"/>
    <property type="match status" value="1"/>
</dbReference>
<dbReference type="Gene3D" id="2.70.210.12">
    <property type="entry name" value="GTP1/OBG domain"/>
    <property type="match status" value="1"/>
</dbReference>
<dbReference type="Gene3D" id="3.40.50.300">
    <property type="entry name" value="P-loop containing nucleotide triphosphate hydrolases"/>
    <property type="match status" value="1"/>
</dbReference>
<dbReference type="HAMAP" id="MF_01454">
    <property type="entry name" value="GTPase_Obg"/>
    <property type="match status" value="1"/>
</dbReference>
<dbReference type="InterPro" id="IPR031167">
    <property type="entry name" value="G_OBG"/>
</dbReference>
<dbReference type="InterPro" id="IPR006073">
    <property type="entry name" value="GTP-bd"/>
</dbReference>
<dbReference type="InterPro" id="IPR014100">
    <property type="entry name" value="GTP-bd_Obg/CgtA"/>
</dbReference>
<dbReference type="InterPro" id="IPR006074">
    <property type="entry name" value="GTP1-OBG_CS"/>
</dbReference>
<dbReference type="InterPro" id="IPR006169">
    <property type="entry name" value="GTP1_OBG_dom"/>
</dbReference>
<dbReference type="InterPro" id="IPR036726">
    <property type="entry name" value="GTP1_OBG_dom_sf"/>
</dbReference>
<dbReference type="InterPro" id="IPR045086">
    <property type="entry name" value="OBG_GTPase"/>
</dbReference>
<dbReference type="InterPro" id="IPR027417">
    <property type="entry name" value="P-loop_NTPase"/>
</dbReference>
<dbReference type="NCBIfam" id="TIGR02729">
    <property type="entry name" value="Obg_CgtA"/>
    <property type="match status" value="1"/>
</dbReference>
<dbReference type="NCBIfam" id="NF008955">
    <property type="entry name" value="PRK12297.1"/>
    <property type="match status" value="1"/>
</dbReference>
<dbReference type="NCBIfam" id="NF008956">
    <property type="entry name" value="PRK12299.1"/>
    <property type="match status" value="1"/>
</dbReference>
<dbReference type="PANTHER" id="PTHR11702">
    <property type="entry name" value="DEVELOPMENTALLY REGULATED GTP-BINDING PROTEIN-RELATED"/>
    <property type="match status" value="1"/>
</dbReference>
<dbReference type="PANTHER" id="PTHR11702:SF31">
    <property type="entry name" value="MITOCHONDRIAL RIBOSOME-ASSOCIATED GTPASE 2"/>
    <property type="match status" value="1"/>
</dbReference>
<dbReference type="Pfam" id="PF01018">
    <property type="entry name" value="GTP1_OBG"/>
    <property type="match status" value="1"/>
</dbReference>
<dbReference type="Pfam" id="PF01926">
    <property type="entry name" value="MMR_HSR1"/>
    <property type="match status" value="1"/>
</dbReference>
<dbReference type="PIRSF" id="PIRSF002401">
    <property type="entry name" value="GTP_bd_Obg/CgtA"/>
    <property type="match status" value="1"/>
</dbReference>
<dbReference type="PRINTS" id="PR00326">
    <property type="entry name" value="GTP1OBG"/>
</dbReference>
<dbReference type="SUPFAM" id="SSF82051">
    <property type="entry name" value="Obg GTP-binding protein N-terminal domain"/>
    <property type="match status" value="1"/>
</dbReference>
<dbReference type="SUPFAM" id="SSF52540">
    <property type="entry name" value="P-loop containing nucleoside triphosphate hydrolases"/>
    <property type="match status" value="1"/>
</dbReference>
<dbReference type="PROSITE" id="PS51710">
    <property type="entry name" value="G_OBG"/>
    <property type="match status" value="1"/>
</dbReference>
<dbReference type="PROSITE" id="PS00905">
    <property type="entry name" value="GTP1_OBG"/>
    <property type="match status" value="1"/>
</dbReference>
<dbReference type="PROSITE" id="PS51883">
    <property type="entry name" value="OBG"/>
    <property type="match status" value="1"/>
</dbReference>
<gene>
    <name evidence="1" type="primary">obg</name>
    <name type="ordered locus">SAR11_0222</name>
</gene>
<accession>Q4FP46</accession>
<feature type="chain" id="PRO_0000386112" description="GTPase Obg">
    <location>
        <begin position="1"/>
        <end position="327"/>
    </location>
</feature>
<feature type="domain" description="Obg" evidence="2">
    <location>
        <begin position="1"/>
        <end position="159"/>
    </location>
</feature>
<feature type="domain" description="OBG-type G" evidence="1">
    <location>
        <begin position="160"/>
        <end position="327"/>
    </location>
</feature>
<feature type="binding site" evidence="1">
    <location>
        <begin position="166"/>
        <end position="173"/>
    </location>
    <ligand>
        <name>GTP</name>
        <dbReference type="ChEBI" id="CHEBI:37565"/>
    </ligand>
</feature>
<feature type="binding site" evidence="1">
    <location>
        <position position="173"/>
    </location>
    <ligand>
        <name>Mg(2+)</name>
        <dbReference type="ChEBI" id="CHEBI:18420"/>
    </ligand>
</feature>
<feature type="binding site" evidence="1">
    <location>
        <begin position="191"/>
        <end position="195"/>
    </location>
    <ligand>
        <name>GTP</name>
        <dbReference type="ChEBI" id="CHEBI:37565"/>
    </ligand>
</feature>
<feature type="binding site" evidence="1">
    <location>
        <position position="193"/>
    </location>
    <ligand>
        <name>Mg(2+)</name>
        <dbReference type="ChEBI" id="CHEBI:18420"/>
    </ligand>
</feature>
<feature type="binding site" evidence="1">
    <location>
        <begin position="212"/>
        <end position="215"/>
    </location>
    <ligand>
        <name>GTP</name>
        <dbReference type="ChEBI" id="CHEBI:37565"/>
    </ligand>
</feature>
<feature type="binding site" evidence="1">
    <location>
        <begin position="279"/>
        <end position="282"/>
    </location>
    <ligand>
        <name>GTP</name>
        <dbReference type="ChEBI" id="CHEBI:37565"/>
    </ligand>
</feature>
<feature type="binding site" evidence="1">
    <location>
        <begin position="308"/>
        <end position="310"/>
    </location>
    <ligand>
        <name>GTP</name>
        <dbReference type="ChEBI" id="CHEBI:37565"/>
    </ligand>
</feature>
<name>OBG_PELUB</name>
<organism>
    <name type="scientific">Pelagibacter ubique (strain HTCC1062)</name>
    <dbReference type="NCBI Taxonomy" id="335992"/>
    <lineage>
        <taxon>Bacteria</taxon>
        <taxon>Pseudomonadati</taxon>
        <taxon>Pseudomonadota</taxon>
        <taxon>Alphaproteobacteria</taxon>
        <taxon>Candidatus Pelagibacterales</taxon>
        <taxon>Candidatus Pelagibacteraceae</taxon>
        <taxon>Candidatus Pelagibacter</taxon>
    </lineage>
</organism>